<feature type="chain" id="PRO_0000447752" description="Magnetosome protein MamQ 2">
    <location>
        <begin position="1"/>
        <end position="272"/>
    </location>
</feature>
<feature type="topological domain" description="Cytoplasmic" evidence="5">
    <location>
        <begin position="1"/>
        <end position="46"/>
    </location>
</feature>
<feature type="transmembrane region" description="Helical" evidence="2">
    <location>
        <begin position="47"/>
        <end position="67"/>
    </location>
</feature>
<feature type="topological domain" description="Lumenal" evidence="5">
    <location>
        <begin position="68"/>
        <end position="272"/>
    </location>
</feature>
<reference key="1">
    <citation type="journal article" date="2005" name="DNA Res.">
        <title>Complete genome sequence of the facultative anaerobic magnetotactic bacterium Magnetospirillum sp. strain AMB-1.</title>
        <authorList>
            <person name="Matsunaga T."/>
            <person name="Okamura Y."/>
            <person name="Fukuda Y."/>
            <person name="Wahyudi A.T."/>
            <person name="Murase Y."/>
            <person name="Takeyama H."/>
        </authorList>
    </citation>
    <scope>NUCLEOTIDE SEQUENCE [LARGE SCALE GENOMIC DNA]</scope>
    <source>
        <strain>ATCC 700264 / AMB-1</strain>
    </source>
</reference>
<reference key="2">
    <citation type="journal article" date="2010" name="Proc. Natl. Acad. Sci. U.S.A.">
        <title>Comprehensive genetic dissection of the magnetosome gene island reveals the step-wise assembly of a prokaryotic organelle.</title>
        <authorList>
            <person name="Murat D."/>
            <person name="Quinlan A."/>
            <person name="Vali H."/>
            <person name="Komeili A."/>
        </authorList>
    </citation>
    <scope>FUNCTION</scope>
    <scope>PROBABLE OPERON</scope>
    <scope>DISRUPTION PHENOTYPE</scope>
    <source>
        <strain>ATCC 700264 / AMB-1</strain>
    </source>
</reference>
<reference key="3">
    <citation type="journal article" date="2016" name="MBio">
        <title>Dynamic Remodeling of the Magnetosome Membrane Is Triggered by the Initiation of Biomineralization.</title>
        <authorList>
            <person name="Cornejo E."/>
            <person name="Subramanian P."/>
            <person name="Li Z."/>
            <person name="Jensen G.J."/>
            <person name="Komeili A."/>
        </authorList>
    </citation>
    <scope>FUNCTION</scope>
    <scope>DISRUPTION PHENOTYPE</scope>
    <source>
        <strain>ATCC 700264 / AMB-1</strain>
    </source>
</reference>
<evidence type="ECO:0000250" key="1">
    <source>
        <dbReference type="UniProtKB" id="Q93DY8"/>
    </source>
</evidence>
<evidence type="ECO:0000255" key="2"/>
<evidence type="ECO:0000269" key="3">
    <source>
    </source>
</evidence>
<evidence type="ECO:0000269" key="4">
    <source>
    </source>
</evidence>
<evidence type="ECO:0000305" key="5"/>
<evidence type="ECO:0000305" key="6">
    <source>
    </source>
</evidence>
<gene>
    <name type="primary">mamQ2</name>
    <name type="ordered locus">amb1005</name>
</gene>
<name>MAMQ2_PARM1</name>
<accession>Q2W8L6</accession>
<keyword id="KW-0091">Biomineralization</keyword>
<keyword id="KW-1281">Magnetosome</keyword>
<keyword id="KW-0472">Membrane</keyword>
<keyword id="KW-0812">Transmembrane</keyword>
<keyword id="KW-1133">Transmembrane helix</keyword>
<proteinExistence type="inferred from homology"/>
<protein>
    <recommendedName>
        <fullName evidence="5">Magnetosome protein MamQ 2</fullName>
    </recommendedName>
</protein>
<dbReference type="EMBL" id="AP007255">
    <property type="protein sequence ID" value="BAE49809.1"/>
    <property type="molecule type" value="Genomic_DNA"/>
</dbReference>
<dbReference type="SMR" id="Q2W8L6"/>
<dbReference type="KEGG" id="mag:amb1005"/>
<dbReference type="HOGENOM" id="CLU_056714_0_0_5"/>
<dbReference type="OrthoDB" id="9804152at2"/>
<dbReference type="Proteomes" id="UP000007058">
    <property type="component" value="Chromosome"/>
</dbReference>
<dbReference type="GO" id="GO:0110146">
    <property type="term" value="C:magnetosome membrane"/>
    <property type="evidence" value="ECO:0007669"/>
    <property type="project" value="UniProtKB-SubCell"/>
</dbReference>
<dbReference type="Gene3D" id="1.20.1440.20">
    <property type="entry name" value="LemA-like domain"/>
    <property type="match status" value="1"/>
</dbReference>
<dbReference type="InterPro" id="IPR023353">
    <property type="entry name" value="LemA-like_dom_sf"/>
</dbReference>
<dbReference type="InterPro" id="IPR007156">
    <property type="entry name" value="MamQ_LemA"/>
</dbReference>
<dbReference type="NCBIfam" id="NF040966">
    <property type="entry name" value="MamQ"/>
    <property type="match status" value="1"/>
</dbReference>
<dbReference type="PANTHER" id="PTHR34478">
    <property type="entry name" value="PROTEIN LEMA"/>
    <property type="match status" value="1"/>
</dbReference>
<dbReference type="PANTHER" id="PTHR34478:SF1">
    <property type="entry name" value="PROTEIN LEMA"/>
    <property type="match status" value="1"/>
</dbReference>
<dbReference type="Pfam" id="PF04011">
    <property type="entry name" value="LemA"/>
    <property type="match status" value="1"/>
</dbReference>
<dbReference type="SUPFAM" id="SSF140478">
    <property type="entry name" value="LemA-like"/>
    <property type="match status" value="1"/>
</dbReference>
<sequence length="272" mass="29948">MALGDANVGSAPGVDFSALQRVKQSEELLAQLYVVEETPRRLGRGPVHALMVISVLSVVAFIATLLMRYNTFVTMSEDTQAKRSNYEVMIQRRDNLFGNLVKLTLNHAALEHSIFSHTSDKRTEGVEAGKGGPIGSALEQLMKQGGIGKLLGDIGGGKALLGADGGFGNALGRLMAVVEQYPTIQSVDTYKHMMTSLVEMEDRIATRREDYNAAASTYNIEITKWPWNYLAFITGFKRAEYFQEKPAGDTPIITPQLFQELLPLNHAQDIKK</sequence>
<organism>
    <name type="scientific">Paramagnetospirillum magneticum (strain ATCC 700264 / AMB-1)</name>
    <name type="common">Magnetospirillum magneticum</name>
    <dbReference type="NCBI Taxonomy" id="342108"/>
    <lineage>
        <taxon>Bacteria</taxon>
        <taxon>Pseudomonadati</taxon>
        <taxon>Pseudomonadota</taxon>
        <taxon>Alphaproteobacteria</taxon>
        <taxon>Rhodospirillales</taxon>
        <taxon>Magnetospirillaceae</taxon>
        <taxon>Paramagnetospirillum</taxon>
    </lineage>
</organism>
<comment type="function">
    <text evidence="3 4">Essential for magnetosome formation (PubMed:20212111). Can be used to induce magnetosome formation (PubMed:26884433).</text>
</comment>
<comment type="subcellular location">
    <subcellularLocation>
        <location evidence="1">Magnetosome membrane</location>
        <topology evidence="2">Single-pass membrane protein</topology>
    </subcellularLocation>
</comment>
<comment type="disruption phenotype">
    <text evidence="3 4">When both copies of this protein (amb0972 and amb1005) are deleted cells have no magnetic response and no magnetosome membranes. Deletion of just amb0972 leads to an intermediate magnetic response and still makes magnetosome membranes (PubMed:20212111). A careful electron cryotomography exam shows that in the double deletion empty vesicles that might be magnetosome precursors are present (PubMed:26884433). Deletion of genes mamH to mamV (amb0961 to amb0978) gives cells with no magnetosomes and no magnetic response (PubMed:20212111).</text>
</comment>
<comment type="miscellaneous">
    <text evidence="5">This bacteria makes up to 20 cubo-octahedral magnetosomes of about 45 nm in diameter which contain membrane-bound crystals of magnetite (Fe(3)O(4)).</text>
</comment>
<comment type="miscellaneous">
    <text evidence="6">There is an identical gene in the genome (amb0972, AC Q2W8P9).</text>
</comment>
<comment type="similarity">
    <text evidence="5">Belongs to the LemA family.</text>
</comment>